<dbReference type="EMBL" id="Z48009">
    <property type="protein sequence ID" value="CAA88082.1"/>
    <property type="molecule type" value="Genomic_DNA"/>
</dbReference>
<dbReference type="PIR" id="T18618">
    <property type="entry name" value="T18618"/>
</dbReference>
<dbReference type="RefSeq" id="NP_496046.1">
    <property type="nucleotide sequence ID" value="NM_063645.5"/>
</dbReference>
<dbReference type="SMR" id="Q09212"/>
<dbReference type="FunCoup" id="Q09212">
    <property type="interactions" value="3"/>
</dbReference>
<dbReference type="STRING" id="6239.AH6.14.1"/>
<dbReference type="TCDB" id="9.A.14.23.8">
    <property type="family name" value="the g-protein-coupled receptor (gpcr) family"/>
</dbReference>
<dbReference type="PaxDb" id="6239-AH6.14"/>
<dbReference type="EnsemblMetazoa" id="AH6.14.1">
    <property type="protein sequence ID" value="AH6.14.1"/>
    <property type="gene ID" value="WBGene00005035"/>
</dbReference>
<dbReference type="GeneID" id="191780"/>
<dbReference type="KEGG" id="cel:CELE_AH6.14"/>
<dbReference type="UCSC" id="AH6.14">
    <property type="organism name" value="c. elegans"/>
</dbReference>
<dbReference type="AGR" id="WB:WBGene00005035"/>
<dbReference type="CTD" id="191780"/>
<dbReference type="WormBase" id="AH6.14">
    <property type="protein sequence ID" value="CE01455"/>
    <property type="gene ID" value="WBGene00005035"/>
    <property type="gene designation" value="sra-9"/>
</dbReference>
<dbReference type="eggNOG" id="ENOG502TH28">
    <property type="taxonomic scope" value="Eukaryota"/>
</dbReference>
<dbReference type="GeneTree" id="ENSGT00970000195848"/>
<dbReference type="HOGENOM" id="CLU_048025_0_1_1"/>
<dbReference type="InParanoid" id="Q09212"/>
<dbReference type="OMA" id="DFYFWVV"/>
<dbReference type="OrthoDB" id="5820030at2759"/>
<dbReference type="PhylomeDB" id="Q09212"/>
<dbReference type="PRO" id="PR:Q09212"/>
<dbReference type="Proteomes" id="UP000001940">
    <property type="component" value="Chromosome II"/>
</dbReference>
<dbReference type="GO" id="GO:0016020">
    <property type="term" value="C:membrane"/>
    <property type="evidence" value="ECO:0007669"/>
    <property type="project" value="UniProtKB-SubCell"/>
</dbReference>
<dbReference type="GO" id="GO:0004930">
    <property type="term" value="F:G protein-coupled receptor activity"/>
    <property type="evidence" value="ECO:0007669"/>
    <property type="project" value="InterPro"/>
</dbReference>
<dbReference type="GO" id="GO:0004984">
    <property type="term" value="F:olfactory receptor activity"/>
    <property type="evidence" value="ECO:0000318"/>
    <property type="project" value="GO_Central"/>
</dbReference>
<dbReference type="GO" id="GO:0050907">
    <property type="term" value="P:detection of chemical stimulus involved in sensory perception"/>
    <property type="evidence" value="ECO:0000318"/>
    <property type="project" value="GO_Central"/>
</dbReference>
<dbReference type="InterPro" id="IPR000344">
    <property type="entry name" value="7TM_GPCR_serpentine_rcpt_Sra"/>
</dbReference>
<dbReference type="InterPro" id="IPR051080">
    <property type="entry name" value="Nematode_rcpt-like_serp_alpha"/>
</dbReference>
<dbReference type="PANTHER" id="PTHR31357:SF5">
    <property type="entry name" value="SERPENTINE RECEPTOR CLASS ALPHA-1-RELATED"/>
    <property type="match status" value="1"/>
</dbReference>
<dbReference type="PANTHER" id="PTHR31357">
    <property type="entry name" value="SERPENTINE RECEPTOR CLASS ALPHA-10"/>
    <property type="match status" value="1"/>
</dbReference>
<dbReference type="Pfam" id="PF02117">
    <property type="entry name" value="7TM_GPCR_Sra"/>
    <property type="match status" value="1"/>
</dbReference>
<dbReference type="PRINTS" id="PR00697">
    <property type="entry name" value="TMPROTEINSRA"/>
</dbReference>
<comment type="subcellular location">
    <subcellularLocation>
        <location evidence="2">Membrane</location>
        <topology evidence="2">Multi-pass membrane protein</topology>
    </subcellularLocation>
</comment>
<comment type="similarity">
    <text evidence="2">Belongs to the nematode receptor-like protein sra family.</text>
</comment>
<reference key="1">
    <citation type="journal article" date="1998" name="Science">
        <title>Genome sequence of the nematode C. elegans: a platform for investigating biology.</title>
        <authorList>
            <consortium name="The C. elegans sequencing consortium"/>
        </authorList>
    </citation>
    <scope>NUCLEOTIDE SEQUENCE [LARGE SCALE GENOMIC DNA]</scope>
    <source>
        <strain>Bristol N2</strain>
    </source>
</reference>
<name>SRA9_CAEEL</name>
<accession>Q09212</accession>
<protein>
    <recommendedName>
        <fullName>Serpentine receptor class alpha-9</fullName>
        <shortName>Protein sra-9</shortName>
    </recommendedName>
</protein>
<keyword id="KW-0472">Membrane</keyword>
<keyword id="KW-1185">Reference proteome</keyword>
<keyword id="KW-0812">Transmembrane</keyword>
<keyword id="KW-1133">Transmembrane helix</keyword>
<proteinExistence type="inferred from homology"/>
<feature type="chain" id="PRO_0000104475" description="Serpentine receptor class alpha-9">
    <location>
        <begin position="1"/>
        <end position="331"/>
    </location>
</feature>
<feature type="transmembrane region" description="Helical" evidence="1">
    <location>
        <begin position="26"/>
        <end position="46"/>
    </location>
</feature>
<feature type="transmembrane region" description="Helical" evidence="1">
    <location>
        <begin position="58"/>
        <end position="78"/>
    </location>
</feature>
<feature type="transmembrane region" description="Helical" evidence="1">
    <location>
        <begin position="104"/>
        <end position="124"/>
    </location>
</feature>
<feature type="transmembrane region" description="Helical" evidence="1">
    <location>
        <begin position="142"/>
        <end position="162"/>
    </location>
</feature>
<feature type="transmembrane region" description="Helical" evidence="1">
    <location>
        <begin position="189"/>
        <end position="209"/>
    </location>
</feature>
<feature type="transmembrane region" description="Helical" evidence="1">
    <location>
        <begin position="238"/>
        <end position="258"/>
    </location>
</feature>
<feature type="transmembrane region" description="Helical" evidence="1">
    <location>
        <begin position="275"/>
        <end position="295"/>
    </location>
</feature>
<gene>
    <name type="primary">sra-9</name>
    <name type="ORF">AH6.14</name>
</gene>
<organism>
    <name type="scientific">Caenorhabditis elegans</name>
    <dbReference type="NCBI Taxonomy" id="6239"/>
    <lineage>
        <taxon>Eukaryota</taxon>
        <taxon>Metazoa</taxon>
        <taxon>Ecdysozoa</taxon>
        <taxon>Nematoda</taxon>
        <taxon>Chromadorea</taxon>
        <taxon>Rhabditida</taxon>
        <taxon>Rhabditina</taxon>
        <taxon>Rhabditomorpha</taxon>
        <taxon>Rhabditoidea</taxon>
        <taxon>Rhabditidae</taxon>
        <taxon>Peloderinae</taxon>
        <taxon>Caenorhabditis</taxon>
    </lineage>
</organism>
<sequence length="331" mass="38284">MATIACASIIEQQRLRSSNFVIAQYIDLLCIVITFVTTYPAIQLVLNKSLFQWSTKMLILESLFFANLYQIFYGIEAITILYKHHFMTSDFCNIMQTESNCAPYLKVILGTTGGMIFAQTGLMIERTCATFLASYRKRKSEIIGFSITIIVFFCSSITGKLFIWDDPLDGMVLGCFILPKNSYKRYNTYFTVCTVLPLFNLGISILLKIYNTKLEYSSRFEVSARFQKREVIDSTGTVCFLAFSLFILLFIYSVGVGALRHLLHENIISQEDFNLCVVWLYTIPFIAMLLPLLLIYRIRRTRSNRIEMLIEFTKQKQSQENHISQMKNMWS</sequence>
<evidence type="ECO:0000255" key="1"/>
<evidence type="ECO:0000305" key="2"/>